<proteinExistence type="inferred from homology"/>
<keyword id="KW-0687">Ribonucleoprotein</keyword>
<keyword id="KW-0689">Ribosomal protein</keyword>
<keyword id="KW-0694">RNA-binding</keyword>
<keyword id="KW-0699">rRNA-binding</keyword>
<name>RL24_CLOBA</name>
<evidence type="ECO:0000255" key="1">
    <source>
        <dbReference type="HAMAP-Rule" id="MF_01326"/>
    </source>
</evidence>
<evidence type="ECO:0000305" key="2"/>
<protein>
    <recommendedName>
        <fullName evidence="1">Large ribosomal subunit protein uL24</fullName>
    </recommendedName>
    <alternativeName>
        <fullName evidence="2">50S ribosomal protein L24</fullName>
    </alternativeName>
</protein>
<comment type="function">
    <text evidence="1">One of two assembly initiator proteins, it binds directly to the 5'-end of the 23S rRNA, where it nucleates assembly of the 50S subunit.</text>
</comment>
<comment type="function">
    <text evidence="1">One of the proteins that surrounds the polypeptide exit tunnel on the outside of the subunit.</text>
</comment>
<comment type="subunit">
    <text evidence="1">Part of the 50S ribosomal subunit.</text>
</comment>
<comment type="similarity">
    <text evidence="1">Belongs to the universal ribosomal protein uL24 family.</text>
</comment>
<reference key="1">
    <citation type="submission" date="2008-05" db="EMBL/GenBank/DDBJ databases">
        <title>Complete genome sequence of Clostridium botulinum E3 str. Alaska E43.</title>
        <authorList>
            <person name="Brinkac L.M."/>
            <person name="Brown J.L."/>
            <person name="Bruce D."/>
            <person name="Detter C."/>
            <person name="Munk C."/>
            <person name="Smith L.A."/>
            <person name="Smith T.J."/>
            <person name="Sutton G."/>
            <person name="Brettin T.S."/>
        </authorList>
    </citation>
    <scope>NUCLEOTIDE SEQUENCE [LARGE SCALE GENOMIC DNA]</scope>
    <source>
        <strain>Alaska E43 / Type E3</strain>
    </source>
</reference>
<sequence length="104" mass="11504">MKVHVRKSDTVVVISGKDKGKTGEVLKVYPKTGKVLVQGINIVKKHQKANKSQVESAIIEREAAINSSKVMLYCNKCKNATRIANKILDDGTKVRVCKKCSETF</sequence>
<feature type="chain" id="PRO_0000355657" description="Large ribosomal subunit protein uL24">
    <location>
        <begin position="1"/>
        <end position="104"/>
    </location>
</feature>
<dbReference type="EMBL" id="CP001078">
    <property type="protein sequence ID" value="ACD51219.1"/>
    <property type="molecule type" value="Genomic_DNA"/>
</dbReference>
<dbReference type="RefSeq" id="WP_012449622.1">
    <property type="nucleotide sequence ID" value="NC_010723.1"/>
</dbReference>
<dbReference type="SMR" id="B2UYC1"/>
<dbReference type="KEGG" id="cbt:CLH_0248"/>
<dbReference type="HOGENOM" id="CLU_093315_2_3_9"/>
<dbReference type="GO" id="GO:1990904">
    <property type="term" value="C:ribonucleoprotein complex"/>
    <property type="evidence" value="ECO:0007669"/>
    <property type="project" value="UniProtKB-KW"/>
</dbReference>
<dbReference type="GO" id="GO:0005840">
    <property type="term" value="C:ribosome"/>
    <property type="evidence" value="ECO:0007669"/>
    <property type="project" value="UniProtKB-KW"/>
</dbReference>
<dbReference type="GO" id="GO:0019843">
    <property type="term" value="F:rRNA binding"/>
    <property type="evidence" value="ECO:0007669"/>
    <property type="project" value="UniProtKB-UniRule"/>
</dbReference>
<dbReference type="GO" id="GO:0003735">
    <property type="term" value="F:structural constituent of ribosome"/>
    <property type="evidence" value="ECO:0007669"/>
    <property type="project" value="InterPro"/>
</dbReference>
<dbReference type="GO" id="GO:0006412">
    <property type="term" value="P:translation"/>
    <property type="evidence" value="ECO:0007669"/>
    <property type="project" value="UniProtKB-UniRule"/>
</dbReference>
<dbReference type="CDD" id="cd06089">
    <property type="entry name" value="KOW_RPL26"/>
    <property type="match status" value="1"/>
</dbReference>
<dbReference type="FunFam" id="2.30.30.30:FF:000004">
    <property type="entry name" value="50S ribosomal protein L24"/>
    <property type="match status" value="1"/>
</dbReference>
<dbReference type="Gene3D" id="2.30.30.30">
    <property type="match status" value="1"/>
</dbReference>
<dbReference type="HAMAP" id="MF_01326_B">
    <property type="entry name" value="Ribosomal_uL24_B"/>
    <property type="match status" value="1"/>
</dbReference>
<dbReference type="InterPro" id="IPR005824">
    <property type="entry name" value="KOW"/>
</dbReference>
<dbReference type="InterPro" id="IPR014722">
    <property type="entry name" value="Rib_uL2_dom2"/>
</dbReference>
<dbReference type="InterPro" id="IPR003256">
    <property type="entry name" value="Ribosomal_uL24"/>
</dbReference>
<dbReference type="InterPro" id="IPR041988">
    <property type="entry name" value="Ribosomal_uL24_KOW"/>
</dbReference>
<dbReference type="InterPro" id="IPR008991">
    <property type="entry name" value="Translation_prot_SH3-like_sf"/>
</dbReference>
<dbReference type="NCBIfam" id="TIGR01079">
    <property type="entry name" value="rplX_bact"/>
    <property type="match status" value="1"/>
</dbReference>
<dbReference type="PANTHER" id="PTHR12903">
    <property type="entry name" value="MITOCHONDRIAL RIBOSOMAL PROTEIN L24"/>
    <property type="match status" value="1"/>
</dbReference>
<dbReference type="Pfam" id="PF00467">
    <property type="entry name" value="KOW"/>
    <property type="match status" value="1"/>
</dbReference>
<dbReference type="Pfam" id="PF17136">
    <property type="entry name" value="ribosomal_L24"/>
    <property type="match status" value="1"/>
</dbReference>
<dbReference type="SMART" id="SM00739">
    <property type="entry name" value="KOW"/>
    <property type="match status" value="1"/>
</dbReference>
<dbReference type="SUPFAM" id="SSF50104">
    <property type="entry name" value="Translation proteins SH3-like domain"/>
    <property type="match status" value="1"/>
</dbReference>
<organism>
    <name type="scientific">Clostridium botulinum (strain Alaska E43 / Type E3)</name>
    <dbReference type="NCBI Taxonomy" id="508767"/>
    <lineage>
        <taxon>Bacteria</taxon>
        <taxon>Bacillati</taxon>
        <taxon>Bacillota</taxon>
        <taxon>Clostridia</taxon>
        <taxon>Eubacteriales</taxon>
        <taxon>Clostridiaceae</taxon>
        <taxon>Clostridium</taxon>
    </lineage>
</organism>
<gene>
    <name evidence="1" type="primary">rplX</name>
    <name type="ordered locus">CLH_0248</name>
</gene>
<accession>B2UYC1</accession>